<proteinExistence type="inferred from homology"/>
<name>MURB_RHIR8</name>
<gene>
    <name evidence="1" type="primary">murB</name>
    <name type="ordered locus">Arad_2994</name>
</gene>
<reference key="1">
    <citation type="journal article" date="2009" name="J. Bacteriol.">
        <title>Genome sequences of three Agrobacterium biovars help elucidate the evolution of multichromosome genomes in bacteria.</title>
        <authorList>
            <person name="Slater S.C."/>
            <person name="Goldman B.S."/>
            <person name="Goodner B."/>
            <person name="Setubal J.C."/>
            <person name="Farrand S.K."/>
            <person name="Nester E.W."/>
            <person name="Burr T.J."/>
            <person name="Banta L."/>
            <person name="Dickerman A.W."/>
            <person name="Paulsen I."/>
            <person name="Otten L."/>
            <person name="Suen G."/>
            <person name="Welch R."/>
            <person name="Almeida N.F."/>
            <person name="Arnold F."/>
            <person name="Burton O.T."/>
            <person name="Du Z."/>
            <person name="Ewing A."/>
            <person name="Godsy E."/>
            <person name="Heisel S."/>
            <person name="Houmiel K.L."/>
            <person name="Jhaveri J."/>
            <person name="Lu J."/>
            <person name="Miller N.M."/>
            <person name="Norton S."/>
            <person name="Chen Q."/>
            <person name="Phoolcharoen W."/>
            <person name="Ohlin V."/>
            <person name="Ondrusek D."/>
            <person name="Pride N."/>
            <person name="Stricklin S.L."/>
            <person name="Sun J."/>
            <person name="Wheeler C."/>
            <person name="Wilson L."/>
            <person name="Zhu H."/>
            <person name="Wood D.W."/>
        </authorList>
    </citation>
    <scope>NUCLEOTIDE SEQUENCE [LARGE SCALE GENOMIC DNA]</scope>
    <source>
        <strain>K84 / ATCC BAA-868</strain>
    </source>
</reference>
<evidence type="ECO:0000255" key="1">
    <source>
        <dbReference type="HAMAP-Rule" id="MF_00037"/>
    </source>
</evidence>
<keyword id="KW-0131">Cell cycle</keyword>
<keyword id="KW-0132">Cell division</keyword>
<keyword id="KW-0133">Cell shape</keyword>
<keyword id="KW-0961">Cell wall biogenesis/degradation</keyword>
<keyword id="KW-0963">Cytoplasm</keyword>
<keyword id="KW-0274">FAD</keyword>
<keyword id="KW-0285">Flavoprotein</keyword>
<keyword id="KW-0521">NADP</keyword>
<keyword id="KW-0560">Oxidoreductase</keyword>
<keyword id="KW-0573">Peptidoglycan synthesis</keyword>
<feature type="chain" id="PRO_1000191391" description="UDP-N-acetylenolpyruvoylglucosamine reductase">
    <location>
        <begin position="1"/>
        <end position="324"/>
    </location>
</feature>
<feature type="domain" description="FAD-binding PCMH-type" evidence="1">
    <location>
        <begin position="36"/>
        <end position="217"/>
    </location>
</feature>
<feature type="active site" evidence="1">
    <location>
        <position position="183"/>
    </location>
</feature>
<feature type="active site" description="Proton donor" evidence="1">
    <location>
        <position position="232"/>
    </location>
</feature>
<feature type="active site" evidence="1">
    <location>
        <position position="302"/>
    </location>
</feature>
<sequence>MKQVNGEKLLASLGDSVKDIRGRLTPDAPMDRVTWFRAGGLAELMFQPHDTDDLIDFLKILPDDVPLTVVGVGSNILVRDGGIPGVVLRLSAKGFGSVELAGENRILAGAICPDKHVAAMAMDNGIGGFHFYYGIPGGIGGAARMNAGANGAETCERVIEVHAVDRKGVKHVLTNDQMGYTYRHSAAADDLIFTHVLFEGYPEDRTKIRAEMDAVRAHRETVQPIREKTGGSTFKNPDGLSAWKLIDEAGCRGLVIGGAQMSSLHCNFMINMEQATGYDLEYLGEQVRREVFEKSGVKLEWEIKRLGGFMPGREVRPFQGVTTE</sequence>
<accession>B9JH49</accession>
<organism>
    <name type="scientific">Rhizobium rhizogenes (strain K84 / ATCC BAA-868)</name>
    <name type="common">Agrobacterium radiobacter</name>
    <dbReference type="NCBI Taxonomy" id="311403"/>
    <lineage>
        <taxon>Bacteria</taxon>
        <taxon>Pseudomonadati</taxon>
        <taxon>Pseudomonadota</taxon>
        <taxon>Alphaproteobacteria</taxon>
        <taxon>Hyphomicrobiales</taxon>
        <taxon>Rhizobiaceae</taxon>
        <taxon>Rhizobium/Agrobacterium group</taxon>
        <taxon>Rhizobium</taxon>
    </lineage>
</organism>
<dbReference type="EC" id="1.3.1.98" evidence="1"/>
<dbReference type="EMBL" id="CP000628">
    <property type="protein sequence ID" value="ACM27046.1"/>
    <property type="molecule type" value="Genomic_DNA"/>
</dbReference>
<dbReference type="RefSeq" id="WP_012651816.1">
    <property type="nucleotide sequence ID" value="NC_011985.1"/>
</dbReference>
<dbReference type="SMR" id="B9JH49"/>
<dbReference type="STRING" id="311403.Arad_2994"/>
<dbReference type="GeneID" id="86848917"/>
<dbReference type="KEGG" id="ara:Arad_2994"/>
<dbReference type="eggNOG" id="COG0812">
    <property type="taxonomic scope" value="Bacteria"/>
</dbReference>
<dbReference type="HOGENOM" id="CLU_035304_1_0_5"/>
<dbReference type="UniPathway" id="UPA00219"/>
<dbReference type="Proteomes" id="UP000001600">
    <property type="component" value="Chromosome 1"/>
</dbReference>
<dbReference type="GO" id="GO:0005829">
    <property type="term" value="C:cytosol"/>
    <property type="evidence" value="ECO:0007669"/>
    <property type="project" value="TreeGrafter"/>
</dbReference>
<dbReference type="GO" id="GO:0071949">
    <property type="term" value="F:FAD binding"/>
    <property type="evidence" value="ECO:0007669"/>
    <property type="project" value="InterPro"/>
</dbReference>
<dbReference type="GO" id="GO:0008762">
    <property type="term" value="F:UDP-N-acetylmuramate dehydrogenase activity"/>
    <property type="evidence" value="ECO:0007669"/>
    <property type="project" value="UniProtKB-UniRule"/>
</dbReference>
<dbReference type="GO" id="GO:0051301">
    <property type="term" value="P:cell division"/>
    <property type="evidence" value="ECO:0007669"/>
    <property type="project" value="UniProtKB-KW"/>
</dbReference>
<dbReference type="GO" id="GO:0071555">
    <property type="term" value="P:cell wall organization"/>
    <property type="evidence" value="ECO:0007669"/>
    <property type="project" value="UniProtKB-KW"/>
</dbReference>
<dbReference type="GO" id="GO:0009252">
    <property type="term" value="P:peptidoglycan biosynthetic process"/>
    <property type="evidence" value="ECO:0007669"/>
    <property type="project" value="UniProtKB-UniRule"/>
</dbReference>
<dbReference type="GO" id="GO:0008360">
    <property type="term" value="P:regulation of cell shape"/>
    <property type="evidence" value="ECO:0007669"/>
    <property type="project" value="UniProtKB-KW"/>
</dbReference>
<dbReference type="Gene3D" id="3.30.465.10">
    <property type="match status" value="1"/>
</dbReference>
<dbReference type="Gene3D" id="3.90.78.10">
    <property type="entry name" value="UDP-N-acetylenolpyruvoylglucosamine reductase, C-terminal domain"/>
    <property type="match status" value="1"/>
</dbReference>
<dbReference type="Gene3D" id="3.30.43.10">
    <property type="entry name" value="Uridine Diphospho-n-acetylenolpyruvylglucosamine Reductase, domain 2"/>
    <property type="match status" value="1"/>
</dbReference>
<dbReference type="HAMAP" id="MF_00037">
    <property type="entry name" value="MurB"/>
    <property type="match status" value="1"/>
</dbReference>
<dbReference type="InterPro" id="IPR016166">
    <property type="entry name" value="FAD-bd_PCMH"/>
</dbReference>
<dbReference type="InterPro" id="IPR036318">
    <property type="entry name" value="FAD-bd_PCMH-like_sf"/>
</dbReference>
<dbReference type="InterPro" id="IPR016167">
    <property type="entry name" value="FAD-bd_PCMH_sub1"/>
</dbReference>
<dbReference type="InterPro" id="IPR016169">
    <property type="entry name" value="FAD-bd_PCMH_sub2"/>
</dbReference>
<dbReference type="InterPro" id="IPR003170">
    <property type="entry name" value="MurB"/>
</dbReference>
<dbReference type="InterPro" id="IPR011601">
    <property type="entry name" value="MurB_C"/>
</dbReference>
<dbReference type="InterPro" id="IPR036635">
    <property type="entry name" value="MurB_C_sf"/>
</dbReference>
<dbReference type="InterPro" id="IPR006094">
    <property type="entry name" value="Oxid_FAD_bind_N"/>
</dbReference>
<dbReference type="NCBIfam" id="TIGR00179">
    <property type="entry name" value="murB"/>
    <property type="match status" value="1"/>
</dbReference>
<dbReference type="NCBIfam" id="NF010480">
    <property type="entry name" value="PRK13905.1"/>
    <property type="match status" value="1"/>
</dbReference>
<dbReference type="PANTHER" id="PTHR21071">
    <property type="entry name" value="UDP-N-ACETYLENOLPYRUVOYLGLUCOSAMINE REDUCTASE"/>
    <property type="match status" value="1"/>
</dbReference>
<dbReference type="PANTHER" id="PTHR21071:SF4">
    <property type="entry name" value="UDP-N-ACETYLENOLPYRUVOYLGLUCOSAMINE REDUCTASE"/>
    <property type="match status" value="1"/>
</dbReference>
<dbReference type="Pfam" id="PF01565">
    <property type="entry name" value="FAD_binding_4"/>
    <property type="match status" value="1"/>
</dbReference>
<dbReference type="Pfam" id="PF02873">
    <property type="entry name" value="MurB_C"/>
    <property type="match status" value="1"/>
</dbReference>
<dbReference type="SUPFAM" id="SSF56176">
    <property type="entry name" value="FAD-binding/transporter-associated domain-like"/>
    <property type="match status" value="1"/>
</dbReference>
<dbReference type="SUPFAM" id="SSF56194">
    <property type="entry name" value="Uridine diphospho-N-Acetylenolpyruvylglucosamine reductase, MurB, C-terminal domain"/>
    <property type="match status" value="1"/>
</dbReference>
<dbReference type="PROSITE" id="PS51387">
    <property type="entry name" value="FAD_PCMH"/>
    <property type="match status" value="1"/>
</dbReference>
<protein>
    <recommendedName>
        <fullName evidence="1">UDP-N-acetylenolpyruvoylglucosamine reductase</fullName>
        <ecNumber evidence="1">1.3.1.98</ecNumber>
    </recommendedName>
    <alternativeName>
        <fullName evidence="1">UDP-N-acetylmuramate dehydrogenase</fullName>
    </alternativeName>
</protein>
<comment type="function">
    <text evidence="1">Cell wall formation.</text>
</comment>
<comment type="catalytic activity">
    <reaction evidence="1">
        <text>UDP-N-acetyl-alpha-D-muramate + NADP(+) = UDP-N-acetyl-3-O-(1-carboxyvinyl)-alpha-D-glucosamine + NADPH + H(+)</text>
        <dbReference type="Rhea" id="RHEA:12248"/>
        <dbReference type="ChEBI" id="CHEBI:15378"/>
        <dbReference type="ChEBI" id="CHEBI:57783"/>
        <dbReference type="ChEBI" id="CHEBI:58349"/>
        <dbReference type="ChEBI" id="CHEBI:68483"/>
        <dbReference type="ChEBI" id="CHEBI:70757"/>
        <dbReference type="EC" id="1.3.1.98"/>
    </reaction>
</comment>
<comment type="cofactor">
    <cofactor evidence="1">
        <name>FAD</name>
        <dbReference type="ChEBI" id="CHEBI:57692"/>
    </cofactor>
</comment>
<comment type="pathway">
    <text evidence="1">Cell wall biogenesis; peptidoglycan biosynthesis.</text>
</comment>
<comment type="subcellular location">
    <subcellularLocation>
        <location evidence="1">Cytoplasm</location>
    </subcellularLocation>
</comment>
<comment type="similarity">
    <text evidence="1">Belongs to the MurB family.</text>
</comment>